<keyword id="KW-0004">4Fe-4S</keyword>
<keyword id="KW-0997">Cell inner membrane</keyword>
<keyword id="KW-1003">Cell membrane</keyword>
<keyword id="KW-0249">Electron transport</keyword>
<keyword id="KW-0408">Iron</keyword>
<keyword id="KW-0411">Iron-sulfur</keyword>
<keyword id="KW-0472">Membrane</keyword>
<keyword id="KW-0479">Metal-binding</keyword>
<keyword id="KW-0677">Repeat</keyword>
<keyword id="KW-1278">Translocase</keyword>
<keyword id="KW-0813">Transport</keyword>
<name>RNFC_HAEI8</name>
<protein>
    <recommendedName>
        <fullName evidence="1">Ion-translocating oxidoreductase complex subunit C</fullName>
        <ecNumber evidence="1">7.-.-.-</ecNumber>
    </recommendedName>
    <alternativeName>
        <fullName evidence="1">Rnf electron transport complex subunit C</fullName>
    </alternativeName>
</protein>
<organism>
    <name type="scientific">Haemophilus influenzae (strain 86-028NP)</name>
    <dbReference type="NCBI Taxonomy" id="281310"/>
    <lineage>
        <taxon>Bacteria</taxon>
        <taxon>Pseudomonadati</taxon>
        <taxon>Pseudomonadota</taxon>
        <taxon>Gammaproteobacteria</taxon>
        <taxon>Pasteurellales</taxon>
        <taxon>Pasteurellaceae</taxon>
        <taxon>Haemophilus</taxon>
    </lineage>
</organism>
<dbReference type="EC" id="7.-.-.-" evidence="1"/>
<dbReference type="EMBL" id="CP000057">
    <property type="protein sequence ID" value="AAX88741.1"/>
    <property type="molecule type" value="Genomic_DNA"/>
</dbReference>
<dbReference type="SMR" id="Q4QJQ6"/>
<dbReference type="KEGG" id="hit:NTHI1992"/>
<dbReference type="HOGENOM" id="CLU_010808_2_1_6"/>
<dbReference type="Proteomes" id="UP000002525">
    <property type="component" value="Chromosome"/>
</dbReference>
<dbReference type="GO" id="GO:0005886">
    <property type="term" value="C:plasma membrane"/>
    <property type="evidence" value="ECO:0007669"/>
    <property type="project" value="UniProtKB-SubCell"/>
</dbReference>
<dbReference type="GO" id="GO:0051539">
    <property type="term" value="F:4 iron, 4 sulfur cluster binding"/>
    <property type="evidence" value="ECO:0007669"/>
    <property type="project" value="UniProtKB-KW"/>
</dbReference>
<dbReference type="GO" id="GO:0009055">
    <property type="term" value="F:electron transfer activity"/>
    <property type="evidence" value="ECO:0007669"/>
    <property type="project" value="InterPro"/>
</dbReference>
<dbReference type="GO" id="GO:0046872">
    <property type="term" value="F:metal ion binding"/>
    <property type="evidence" value="ECO:0007669"/>
    <property type="project" value="UniProtKB-KW"/>
</dbReference>
<dbReference type="GO" id="GO:0022900">
    <property type="term" value="P:electron transport chain"/>
    <property type="evidence" value="ECO:0007669"/>
    <property type="project" value="UniProtKB-UniRule"/>
</dbReference>
<dbReference type="Gene3D" id="3.30.70.20">
    <property type="match status" value="1"/>
</dbReference>
<dbReference type="Gene3D" id="3.40.50.11540">
    <property type="entry name" value="NADH-ubiquinone oxidoreductase 51kDa subunit"/>
    <property type="match status" value="1"/>
</dbReference>
<dbReference type="HAMAP" id="MF_00461">
    <property type="entry name" value="RsxC_RnfC"/>
    <property type="match status" value="1"/>
</dbReference>
<dbReference type="InterPro" id="IPR017896">
    <property type="entry name" value="4Fe4S_Fe-S-bd"/>
</dbReference>
<dbReference type="InterPro" id="IPR017900">
    <property type="entry name" value="4Fe4S_Fe_S_CS"/>
</dbReference>
<dbReference type="InterPro" id="IPR010208">
    <property type="entry name" value="Ion_transpt_RnfC/RsxC"/>
</dbReference>
<dbReference type="InterPro" id="IPR011538">
    <property type="entry name" value="Nuo51_FMN-bd"/>
</dbReference>
<dbReference type="InterPro" id="IPR037225">
    <property type="entry name" value="Nuo51_FMN-bd_sf"/>
</dbReference>
<dbReference type="InterPro" id="IPR026902">
    <property type="entry name" value="RnfC_N"/>
</dbReference>
<dbReference type="NCBIfam" id="NF003454">
    <property type="entry name" value="PRK05035.1"/>
    <property type="match status" value="1"/>
</dbReference>
<dbReference type="NCBIfam" id="TIGR01945">
    <property type="entry name" value="rnfC"/>
    <property type="match status" value="1"/>
</dbReference>
<dbReference type="PANTHER" id="PTHR43034">
    <property type="entry name" value="ION-TRANSLOCATING OXIDOREDUCTASE COMPLEX SUBUNIT C"/>
    <property type="match status" value="1"/>
</dbReference>
<dbReference type="PANTHER" id="PTHR43034:SF2">
    <property type="entry name" value="ION-TRANSLOCATING OXIDOREDUCTASE COMPLEX SUBUNIT C"/>
    <property type="match status" value="1"/>
</dbReference>
<dbReference type="Pfam" id="PF01512">
    <property type="entry name" value="Complex1_51K"/>
    <property type="match status" value="1"/>
</dbReference>
<dbReference type="Pfam" id="PF12838">
    <property type="entry name" value="Fer4_7"/>
    <property type="match status" value="1"/>
</dbReference>
<dbReference type="Pfam" id="PF13375">
    <property type="entry name" value="RnfC_N"/>
    <property type="match status" value="1"/>
</dbReference>
<dbReference type="SUPFAM" id="SSF46548">
    <property type="entry name" value="alpha-helical ferredoxin"/>
    <property type="match status" value="1"/>
</dbReference>
<dbReference type="SUPFAM" id="SSF142019">
    <property type="entry name" value="Nqo1 FMN-binding domain-like"/>
    <property type="match status" value="1"/>
</dbReference>
<dbReference type="PROSITE" id="PS00198">
    <property type="entry name" value="4FE4S_FER_1"/>
    <property type="match status" value="2"/>
</dbReference>
<dbReference type="PROSITE" id="PS51379">
    <property type="entry name" value="4FE4S_FER_2"/>
    <property type="match status" value="2"/>
</dbReference>
<gene>
    <name evidence="1" type="primary">rnfC</name>
    <name type="ordered locus">NTHI1992</name>
</gene>
<accession>Q4QJQ6</accession>
<feature type="chain" id="PRO_1000013607" description="Ion-translocating oxidoreductase complex subunit C">
    <location>
        <begin position="1"/>
        <end position="665"/>
    </location>
</feature>
<feature type="domain" description="4Fe-4S ferredoxin-type 1" evidence="1">
    <location>
        <begin position="368"/>
        <end position="398"/>
    </location>
</feature>
<feature type="domain" description="4Fe-4S ferredoxin-type 2" evidence="1">
    <location>
        <begin position="408"/>
        <end position="437"/>
    </location>
</feature>
<feature type="region of interest" description="Disordered" evidence="2">
    <location>
        <begin position="465"/>
        <end position="568"/>
    </location>
</feature>
<feature type="region of interest" description="Disordered" evidence="2">
    <location>
        <begin position="580"/>
        <end position="623"/>
    </location>
</feature>
<feature type="region of interest" description="Disordered" evidence="2">
    <location>
        <begin position="637"/>
        <end position="665"/>
    </location>
</feature>
<feature type="compositionally biased region" description="Basic and acidic residues" evidence="2">
    <location>
        <begin position="465"/>
        <end position="477"/>
    </location>
</feature>
<feature type="compositionally biased region" description="Basic and acidic residues" evidence="2">
    <location>
        <begin position="485"/>
        <end position="513"/>
    </location>
</feature>
<feature type="compositionally biased region" description="Polar residues" evidence="2">
    <location>
        <begin position="554"/>
        <end position="564"/>
    </location>
</feature>
<feature type="compositionally biased region" description="Polar residues" evidence="2">
    <location>
        <begin position="585"/>
        <end position="600"/>
    </location>
</feature>
<feature type="compositionally biased region" description="Basic and acidic residues" evidence="2">
    <location>
        <begin position="602"/>
        <end position="615"/>
    </location>
</feature>
<feature type="compositionally biased region" description="Polar residues" evidence="2">
    <location>
        <begin position="643"/>
        <end position="656"/>
    </location>
</feature>
<feature type="binding site" evidence="1">
    <location>
        <position position="378"/>
    </location>
    <ligand>
        <name>[4Fe-4S] cluster</name>
        <dbReference type="ChEBI" id="CHEBI:49883"/>
        <label>1</label>
    </ligand>
</feature>
<feature type="binding site" evidence="1">
    <location>
        <position position="381"/>
    </location>
    <ligand>
        <name>[4Fe-4S] cluster</name>
        <dbReference type="ChEBI" id="CHEBI:49883"/>
        <label>1</label>
    </ligand>
</feature>
<feature type="binding site" evidence="1">
    <location>
        <position position="384"/>
    </location>
    <ligand>
        <name>[4Fe-4S] cluster</name>
        <dbReference type="ChEBI" id="CHEBI:49883"/>
        <label>1</label>
    </ligand>
</feature>
<feature type="binding site" evidence="1">
    <location>
        <position position="388"/>
    </location>
    <ligand>
        <name>[4Fe-4S] cluster</name>
        <dbReference type="ChEBI" id="CHEBI:49883"/>
        <label>2</label>
    </ligand>
</feature>
<feature type="binding site" evidence="1">
    <location>
        <position position="417"/>
    </location>
    <ligand>
        <name>[4Fe-4S] cluster</name>
        <dbReference type="ChEBI" id="CHEBI:49883"/>
        <label>2</label>
    </ligand>
</feature>
<feature type="binding site" evidence="1">
    <location>
        <position position="420"/>
    </location>
    <ligand>
        <name>[4Fe-4S] cluster</name>
        <dbReference type="ChEBI" id="CHEBI:49883"/>
        <label>2</label>
    </ligand>
</feature>
<feature type="binding site" evidence="1">
    <location>
        <position position="423"/>
    </location>
    <ligand>
        <name>[4Fe-4S] cluster</name>
        <dbReference type="ChEBI" id="CHEBI:49883"/>
        <label>2</label>
    </ligand>
</feature>
<feature type="binding site" evidence="1">
    <location>
        <position position="427"/>
    </location>
    <ligand>
        <name>[4Fe-4S] cluster</name>
        <dbReference type="ChEBI" id="CHEBI:49883"/>
        <label>1</label>
    </ligand>
</feature>
<evidence type="ECO:0000255" key="1">
    <source>
        <dbReference type="HAMAP-Rule" id="MF_00461"/>
    </source>
</evidence>
<evidence type="ECO:0000256" key="2">
    <source>
        <dbReference type="SAM" id="MobiDB-lite"/>
    </source>
</evidence>
<reference key="1">
    <citation type="journal article" date="2005" name="J. Bacteriol.">
        <title>Genomic sequence of an otitis media isolate of nontypeable Haemophilus influenzae: comparative study with H. influenzae serotype d, strain KW20.</title>
        <authorList>
            <person name="Harrison A."/>
            <person name="Dyer D.W."/>
            <person name="Gillaspy A."/>
            <person name="Ray W.C."/>
            <person name="Mungur R."/>
            <person name="Carson M.B."/>
            <person name="Zhong H."/>
            <person name="Gipson J."/>
            <person name="Gipson M."/>
            <person name="Johnson L.S."/>
            <person name="Lewis L."/>
            <person name="Bakaletz L.O."/>
            <person name="Munson R.S. Jr."/>
        </authorList>
    </citation>
    <scope>NUCLEOTIDE SEQUENCE [LARGE SCALE GENOMIC DNA]</scope>
    <source>
        <strain>86-028NP</strain>
    </source>
</reference>
<sequence>MADVLSRFNSGKLWDFKGGIHPPEMKSQSNSQPLRHLPLGTDFYIPLKQHLGTTGNLLIKEGDYVLKGQALTKGDGLRMLPVHAPTSGTIKSIKPYVATHPSGLDEPTIHLQADGLDQWIERNPIDDFSTLSPEQLIHKIYQAGIAGLGGAVFPTAAKIQSAEQKVKLLIINGAECEPYITCDDRLMRERADEIIKGIRILRYILHPEKVVIAIEDNKPEAISAIRTALQGANDISIRVIPTKYPSGATKQLIYLLTGIEVPSGARSSSIGVLMQNVGTMFAIKRAIINDEPLIERVVTLTGNKIAEKGNYWVRLGTPISQILSDAGYQFDKHFPIFAGGPMMGLELPNLNAPVTKLVNCLLAPDYLEYAEPEAEQACIRCSSCSDACPVNLMPQQLYWFARSEDHKKSEEYALKDCIECGICAYVCPSHIPLIQYFRQEKAKIWQIKEKQKKSDEAKIRFEAKQARMEREEQERKARSQRAAQARREELAQTKGEDPVKAALERLKAKKANETEPTQIKTLTSEKGEVLPDNTDLMAQRKARRLARQQAASQVENQEQQTQPTDAKKAAVAAAIARAKAKKLAQTNSTSEAISNSQTAENEVEKTKSAVEKTEENSTALDPKKAAVAAAIARAKAKKLAQANSTSEAISNSQTAENEVEKQIVR</sequence>
<comment type="function">
    <text evidence="1">Part of a membrane-bound complex that couples electron transfer with translocation of ions across the membrane.</text>
</comment>
<comment type="cofactor">
    <cofactor evidence="1">
        <name>[4Fe-4S] cluster</name>
        <dbReference type="ChEBI" id="CHEBI:49883"/>
    </cofactor>
    <text evidence="1">Binds 2 [4Fe-4S] clusters per subunit.</text>
</comment>
<comment type="subunit">
    <text evidence="1">The complex is composed of six subunits: RnfA, RnfB, RnfC, RnfD, RnfE and RnfG.</text>
</comment>
<comment type="subcellular location">
    <subcellularLocation>
        <location evidence="1">Cell inner membrane</location>
        <topology evidence="1">Peripheral membrane protein</topology>
    </subcellularLocation>
</comment>
<comment type="similarity">
    <text evidence="1">Belongs to the 4Fe4S bacterial-type ferredoxin family. RnfC subfamily.</text>
</comment>
<proteinExistence type="inferred from homology"/>